<feature type="initiator methionine" description="Removed" evidence="8 11 13">
    <location>
        <position position="1"/>
    </location>
</feature>
<feature type="chain" id="PRO_0000053302" description="Myoglobin">
    <location>
        <begin position="2"/>
        <end position="154"/>
    </location>
</feature>
<feature type="domain" description="Globin" evidence="5">
    <location>
        <begin position="2"/>
        <end position="148"/>
    </location>
</feature>
<feature type="binding site" evidence="7 59">
    <location>
        <position position="65"/>
    </location>
    <ligand>
        <name>nitrite</name>
        <dbReference type="ChEBI" id="CHEBI:16301"/>
    </ligand>
</feature>
<feature type="binding site" evidence="3 5">
    <location>
        <position position="65"/>
    </location>
    <ligand>
        <name>O2</name>
        <dbReference type="ChEBI" id="CHEBI:15379"/>
    </ligand>
</feature>
<feature type="binding site" description="proximal binding residue" evidence="6 9 12 17 18 19 20 21 22 23 24 25 26 27 28 29 30 31 32 33 34 35 36 37 38 39 40 41 42 43 44 45 46 47 48 49 50 51 52 53 54 55 56 57 58 60 61 62 63 64">
    <location>
        <position position="94"/>
    </location>
    <ligand>
        <name>heme b</name>
        <dbReference type="ChEBI" id="CHEBI:60344"/>
    </ligand>
    <ligandPart>
        <name>Fe</name>
        <dbReference type="ChEBI" id="CHEBI:18248"/>
    </ligandPart>
</feature>
<feature type="modified residue" description="Phosphoserine" evidence="4">
    <location>
        <position position="4"/>
    </location>
</feature>
<feature type="sequence conflict" description="In Ref. 1; AA sequence." evidence="15" ref="1">
    <original>D</original>
    <variation>N</variation>
    <location>
        <position position="123"/>
    </location>
</feature>
<feature type="helix" evidence="65">
    <location>
        <begin position="5"/>
        <end position="19"/>
    </location>
</feature>
<feature type="helix" evidence="65">
    <location>
        <begin position="22"/>
        <end position="36"/>
    </location>
</feature>
<feature type="helix" evidence="65">
    <location>
        <begin position="38"/>
        <end position="41"/>
    </location>
</feature>
<feature type="helix" evidence="65">
    <location>
        <begin position="45"/>
        <end position="47"/>
    </location>
</feature>
<feature type="helix" evidence="65">
    <location>
        <begin position="53"/>
        <end position="58"/>
    </location>
</feature>
<feature type="helix" evidence="65">
    <location>
        <begin position="60"/>
        <end position="96"/>
    </location>
</feature>
<feature type="helix" evidence="65">
    <location>
        <begin position="102"/>
        <end position="119"/>
    </location>
</feature>
<feature type="turn" evidence="65">
    <location>
        <begin position="121"/>
        <end position="123"/>
    </location>
</feature>
<feature type="helix" evidence="65">
    <location>
        <begin position="126"/>
        <end position="149"/>
    </location>
</feature>
<feature type="turn" evidence="66">
    <location>
        <begin position="150"/>
        <end position="153"/>
    </location>
</feature>
<gene>
    <name type="primary">MB</name>
</gene>
<dbReference type="EC" id="1.7.-.-" evidence="10"/>
<dbReference type="EC" id="1.11.1.-" evidence="1"/>
<dbReference type="PIR" id="A91098">
    <property type="entry name" value="MYHO"/>
</dbReference>
<dbReference type="RefSeq" id="NP_001157488.1">
    <property type="nucleotide sequence ID" value="NM_001164016.2"/>
</dbReference>
<dbReference type="PDB" id="1AZI">
    <property type="method" value="X-ray"/>
    <property type="resolution" value="2.00 A"/>
    <property type="chains" value="A=2-154"/>
</dbReference>
<dbReference type="PDB" id="1BJE">
    <property type="method" value="X-ray"/>
    <property type="resolution" value="1.80 A"/>
    <property type="chains" value="A=2-154"/>
</dbReference>
<dbReference type="PDB" id="1DWR">
    <property type="method" value="X-ray"/>
    <property type="resolution" value="1.45 A"/>
    <property type="chains" value="A=2-154"/>
</dbReference>
<dbReference type="PDB" id="1DWS">
    <property type="method" value="X-ray"/>
    <property type="resolution" value="1.45 A"/>
    <property type="chains" value="A=2-154"/>
</dbReference>
<dbReference type="PDB" id="1DWT">
    <property type="method" value="X-ray"/>
    <property type="resolution" value="1.40 A"/>
    <property type="chains" value="A=2-154"/>
</dbReference>
<dbReference type="PDB" id="1GJN">
    <property type="method" value="X-ray"/>
    <property type="resolution" value="1.35 A"/>
    <property type="chains" value="A=2-154"/>
</dbReference>
<dbReference type="PDB" id="1HRM">
    <property type="method" value="X-ray"/>
    <property type="resolution" value="1.70 A"/>
    <property type="chains" value="A=2-154"/>
</dbReference>
<dbReference type="PDB" id="1HSY">
    <property type="method" value="X-ray"/>
    <property type="resolution" value="1.90 A"/>
    <property type="chains" value="A=2-154"/>
</dbReference>
<dbReference type="PDB" id="1NPF">
    <property type="method" value="X-ray"/>
    <property type="resolution" value="1.90 A"/>
    <property type="chains" value="A=2-154"/>
</dbReference>
<dbReference type="PDB" id="1NPG">
    <property type="method" value="X-ray"/>
    <property type="resolution" value="1.70 A"/>
    <property type="chains" value="A=2-154"/>
</dbReference>
<dbReference type="PDB" id="1NZ2">
    <property type="method" value="X-ray"/>
    <property type="resolution" value="1.90 A"/>
    <property type="chains" value="A=2-154"/>
</dbReference>
<dbReference type="PDB" id="1NZ3">
    <property type="method" value="X-ray"/>
    <property type="resolution" value="1.60 A"/>
    <property type="chains" value="A=2-154"/>
</dbReference>
<dbReference type="PDB" id="1NZ4">
    <property type="method" value="X-ray"/>
    <property type="resolution" value="1.80 A"/>
    <property type="chains" value="A=2-154"/>
</dbReference>
<dbReference type="PDB" id="1NZ5">
    <property type="method" value="X-ray"/>
    <property type="resolution" value="1.70 A"/>
    <property type="chains" value="A=2-154"/>
</dbReference>
<dbReference type="PDB" id="1RSE">
    <property type="method" value="X-ray"/>
    <property type="resolution" value="1.70 A"/>
    <property type="chains" value="A=2-154"/>
</dbReference>
<dbReference type="PDB" id="1WLA">
    <property type="method" value="X-ray"/>
    <property type="resolution" value="1.70 A"/>
    <property type="chains" value="A=2-154"/>
</dbReference>
<dbReference type="PDB" id="1XCH">
    <property type="method" value="X-ray"/>
    <property type="resolution" value="1.70 A"/>
    <property type="chains" value="A=2-154"/>
</dbReference>
<dbReference type="PDB" id="1YMA">
    <property type="method" value="X-ray"/>
    <property type="resolution" value="2.00 A"/>
    <property type="chains" value="A=2-154"/>
</dbReference>
<dbReference type="PDB" id="1YMB">
    <property type="method" value="X-ray"/>
    <property type="resolution" value="1.90 A"/>
    <property type="chains" value="A=2-154"/>
</dbReference>
<dbReference type="PDB" id="1YMC">
    <property type="method" value="X-ray"/>
    <property type="resolution" value="2.00 A"/>
    <property type="chains" value="A=2-154"/>
</dbReference>
<dbReference type="PDB" id="2FRF">
    <property type="method" value="X-ray"/>
    <property type="resolution" value="1.20 A"/>
    <property type="chains" value="A=2-154"/>
</dbReference>
<dbReference type="PDB" id="2FRI">
    <property type="method" value="X-ray"/>
    <property type="resolution" value="1.60 A"/>
    <property type="chains" value="X=2-154"/>
</dbReference>
<dbReference type="PDB" id="2FRJ">
    <property type="method" value="X-ray"/>
    <property type="resolution" value="1.30 A"/>
    <property type="chains" value="X=2-154"/>
</dbReference>
<dbReference type="PDB" id="2FRK">
    <property type="method" value="X-ray"/>
    <property type="resolution" value="1.30 A"/>
    <property type="chains" value="X=2-154"/>
</dbReference>
<dbReference type="PDB" id="2IN4">
    <property type="method" value="X-ray"/>
    <property type="resolution" value="2.15 A"/>
    <property type="chains" value="A=2-154"/>
</dbReference>
<dbReference type="PDB" id="2NSR">
    <property type="method" value="X-ray"/>
    <property type="resolution" value="1.90 A"/>
    <property type="chains" value="A=2-154"/>
</dbReference>
<dbReference type="PDB" id="2NSS">
    <property type="method" value="X-ray"/>
    <property type="resolution" value="2.00 A"/>
    <property type="chains" value="A=2-154"/>
</dbReference>
<dbReference type="PDB" id="2O58">
    <property type="method" value="X-ray"/>
    <property type="resolution" value="1.65 A"/>
    <property type="chains" value="X=2-154"/>
</dbReference>
<dbReference type="PDB" id="2O5B">
    <property type="method" value="X-ray"/>
    <property type="resolution" value="2.00 A"/>
    <property type="chains" value="X=2-154"/>
</dbReference>
<dbReference type="PDB" id="2O5L">
    <property type="method" value="X-ray"/>
    <property type="resolution" value="1.70 A"/>
    <property type="chains" value="X=2-154"/>
</dbReference>
<dbReference type="PDB" id="2O5M">
    <property type="method" value="X-ray"/>
    <property type="resolution" value="1.65 A"/>
    <property type="chains" value="X=2-154"/>
</dbReference>
<dbReference type="PDB" id="2O5O">
    <property type="method" value="X-ray"/>
    <property type="resolution" value="1.60 A"/>
    <property type="chains" value="X=2-154"/>
</dbReference>
<dbReference type="PDB" id="2O5Q">
    <property type="method" value="X-ray"/>
    <property type="resolution" value="1.90 A"/>
    <property type="chains" value="X=2-154"/>
</dbReference>
<dbReference type="PDB" id="2O5S">
    <property type="method" value="X-ray"/>
    <property type="resolution" value="1.60 A"/>
    <property type="chains" value="X=2-154"/>
</dbReference>
<dbReference type="PDB" id="2O5T">
    <property type="method" value="X-ray"/>
    <property type="resolution" value="1.60 A"/>
    <property type="chains" value="X=2-154"/>
</dbReference>
<dbReference type="PDB" id="2V1E">
    <property type="method" value="X-ray"/>
    <property type="resolution" value="1.30 A"/>
    <property type="chains" value="A=2-154"/>
</dbReference>
<dbReference type="PDB" id="2V1F">
    <property type="method" value="X-ray"/>
    <property type="resolution" value="1.20 A"/>
    <property type="chains" value="A=2-154"/>
</dbReference>
<dbReference type="PDB" id="2V1G">
    <property type="method" value="X-ray"/>
    <property type="resolution" value="1.35 A"/>
    <property type="chains" value="A=2-154"/>
</dbReference>
<dbReference type="PDB" id="2V1H">
    <property type="method" value="X-ray"/>
    <property type="resolution" value="1.30 A"/>
    <property type="chains" value="A=2-154"/>
</dbReference>
<dbReference type="PDB" id="2V1I">
    <property type="method" value="X-ray"/>
    <property type="resolution" value="1.20 A"/>
    <property type="chains" value="A=2-154"/>
</dbReference>
<dbReference type="PDB" id="2V1J">
    <property type="method" value="X-ray"/>
    <property type="resolution" value="1.40 A"/>
    <property type="chains" value="A=2-154"/>
</dbReference>
<dbReference type="PDB" id="2V1K">
    <property type="method" value="X-ray"/>
    <property type="resolution" value="1.25 A"/>
    <property type="chains" value="A=2-154"/>
</dbReference>
<dbReference type="PDB" id="2VLX">
    <property type="method" value="X-ray"/>
    <property type="resolution" value="1.30 A"/>
    <property type="chains" value="A=2-154"/>
</dbReference>
<dbReference type="PDB" id="2VLY">
    <property type="method" value="X-ray"/>
    <property type="resolution" value="1.60 A"/>
    <property type="chains" value="A=2-154"/>
</dbReference>
<dbReference type="PDB" id="2VLZ">
    <property type="method" value="X-ray"/>
    <property type="resolution" value="1.50 A"/>
    <property type="chains" value="A=2-154"/>
</dbReference>
<dbReference type="PDB" id="2VM0">
    <property type="method" value="X-ray"/>
    <property type="resolution" value="1.60 A"/>
    <property type="chains" value="A=2-154"/>
</dbReference>
<dbReference type="PDB" id="3BA2">
    <property type="method" value="X-ray"/>
    <property type="resolution" value="1.80 A"/>
    <property type="chains" value="A=2-154"/>
</dbReference>
<dbReference type="PDB" id="3HC9">
    <property type="method" value="X-ray"/>
    <property type="resolution" value="2.00 A"/>
    <property type="chains" value="A=2-154"/>
</dbReference>
<dbReference type="PDB" id="3HEN">
    <property type="method" value="X-ray"/>
    <property type="resolution" value="1.90 A"/>
    <property type="chains" value="A=2-154"/>
</dbReference>
<dbReference type="PDB" id="3HEO">
    <property type="method" value="X-ray"/>
    <property type="resolution" value="2.00 A"/>
    <property type="chains" value="A=2-154"/>
</dbReference>
<dbReference type="PDB" id="3HEP">
    <property type="method" value="X-ray"/>
    <property type="resolution" value="1.95 A"/>
    <property type="chains" value="A=2-154"/>
</dbReference>
<dbReference type="PDB" id="3LR7">
    <property type="method" value="X-ray"/>
    <property type="resolution" value="1.60 A"/>
    <property type="chains" value="A=2-154"/>
</dbReference>
<dbReference type="PDB" id="3LR9">
    <property type="method" value="X-ray"/>
    <property type="resolution" value="1.55 A"/>
    <property type="chains" value="A=2-154"/>
</dbReference>
<dbReference type="PDB" id="3RJ6">
    <property type="method" value="X-ray"/>
    <property type="resolution" value="1.23 A"/>
    <property type="chains" value="A/B=2-154"/>
</dbReference>
<dbReference type="PDB" id="3RJN">
    <property type="method" value="X-ray"/>
    <property type="resolution" value="1.90 A"/>
    <property type="chains" value="B=2-154"/>
</dbReference>
<dbReference type="PDB" id="3V2V">
    <property type="method" value="X-ray"/>
    <property type="resolution" value="1.65 A"/>
    <property type="chains" value="A=2-154"/>
</dbReference>
<dbReference type="PDB" id="3V2Z">
    <property type="method" value="X-ray"/>
    <property type="resolution" value="1.65 A"/>
    <property type="chains" value="A=2-154"/>
</dbReference>
<dbReference type="PDB" id="3VAU">
    <property type="method" value="X-ray"/>
    <property type="resolution" value="1.70 A"/>
    <property type="chains" value="A=2-154"/>
</dbReference>
<dbReference type="PDB" id="3VM9">
    <property type="method" value="X-ray"/>
    <property type="resolution" value="1.05 A"/>
    <property type="chains" value="A/B=2-154"/>
</dbReference>
<dbReference type="PDB" id="3WFT">
    <property type="method" value="X-ray"/>
    <property type="resolution" value="1.30 A"/>
    <property type="chains" value="A=2-154"/>
</dbReference>
<dbReference type="PDB" id="3WFU">
    <property type="method" value="X-ray"/>
    <property type="resolution" value="1.35 A"/>
    <property type="chains" value="A=2-154"/>
</dbReference>
<dbReference type="PDB" id="3WI8">
    <property type="method" value="X-ray"/>
    <property type="resolution" value="2.20 A"/>
    <property type="chains" value="A=2-154"/>
</dbReference>
<dbReference type="PDB" id="3WYO">
    <property type="method" value="X-ray"/>
    <property type="resolution" value="2.00 A"/>
    <property type="chains" value="A/B/C/D=2-154"/>
</dbReference>
<dbReference type="PDB" id="4DC7">
    <property type="method" value="X-ray"/>
    <property type="resolution" value="1.50 A"/>
    <property type="chains" value="A=2-153"/>
</dbReference>
<dbReference type="PDB" id="4DC8">
    <property type="method" value="X-ray"/>
    <property type="resolution" value="1.50 A"/>
    <property type="chains" value="A=2-153"/>
</dbReference>
<dbReference type="PDB" id="4NS2">
    <property type="method" value="X-ray"/>
    <property type="resolution" value="1.18 A"/>
    <property type="chains" value="A=1-154"/>
</dbReference>
<dbReference type="PDB" id="4TWU">
    <property type="method" value="X-ray"/>
    <property type="resolution" value="1.08 A"/>
    <property type="chains" value="A=1-154"/>
</dbReference>
<dbReference type="PDB" id="4TWV">
    <property type="method" value="X-ray"/>
    <property type="resolution" value="1.06 A"/>
    <property type="chains" value="A=1-154"/>
</dbReference>
<dbReference type="PDB" id="5AZQ">
    <property type="method" value="X-ray"/>
    <property type="resolution" value="1.40 A"/>
    <property type="chains" value="A=2-154"/>
</dbReference>
<dbReference type="PDB" id="5AZR">
    <property type="method" value="X-ray"/>
    <property type="resolution" value="1.20 A"/>
    <property type="chains" value="A=2-154"/>
</dbReference>
<dbReference type="PDB" id="5CMV">
    <property type="method" value="X-ray"/>
    <property type="resolution" value="1.80 A"/>
    <property type="chains" value="A=2-153"/>
</dbReference>
<dbReference type="PDB" id="5CN4">
    <property type="method" value="X-ray"/>
    <property type="resolution" value="1.80 A"/>
    <property type="chains" value="A=2-153"/>
</dbReference>
<dbReference type="PDB" id="5CN5">
    <property type="method" value="X-ray"/>
    <property type="resolution" value="1.80 A"/>
    <property type="chains" value="A=2-153"/>
</dbReference>
<dbReference type="PDB" id="5CN6">
    <property type="method" value="X-ray"/>
    <property type="resolution" value="1.80 A"/>
    <property type="chains" value="A=2-153"/>
</dbReference>
<dbReference type="PDB" id="5CN7">
    <property type="method" value="X-ray"/>
    <property type="resolution" value="1.80 A"/>
    <property type="chains" value="A=2-153"/>
</dbReference>
<dbReference type="PDB" id="5CN8">
    <property type="method" value="X-ray"/>
    <property type="resolution" value="1.80 A"/>
    <property type="chains" value="A=2-153"/>
</dbReference>
<dbReference type="PDB" id="5CN9">
    <property type="method" value="X-ray"/>
    <property type="resolution" value="1.80 A"/>
    <property type="chains" value="A=2-153"/>
</dbReference>
<dbReference type="PDB" id="5CNB">
    <property type="method" value="X-ray"/>
    <property type="resolution" value="1.80 A"/>
    <property type="chains" value="A=2-153"/>
</dbReference>
<dbReference type="PDB" id="5CNC">
    <property type="method" value="X-ray"/>
    <property type="resolution" value="1.80 A"/>
    <property type="chains" value="A=2-153"/>
</dbReference>
<dbReference type="PDB" id="5CND">
    <property type="method" value="X-ray"/>
    <property type="resolution" value="1.80 A"/>
    <property type="chains" value="A=2-153"/>
</dbReference>
<dbReference type="PDB" id="5CNE">
    <property type="method" value="X-ray"/>
    <property type="resolution" value="1.80 A"/>
    <property type="chains" value="A=2-153"/>
</dbReference>
<dbReference type="PDB" id="5CNF">
    <property type="method" value="X-ray"/>
    <property type="resolution" value="1.80 A"/>
    <property type="chains" value="A=2-153"/>
</dbReference>
<dbReference type="PDB" id="5CNG">
    <property type="method" value="X-ray"/>
    <property type="resolution" value="1.80 A"/>
    <property type="chains" value="A=2-153"/>
</dbReference>
<dbReference type="PDB" id="5D5R">
    <property type="method" value="X-ray"/>
    <property type="resolution" value="1.60 A"/>
    <property type="chains" value="A=2-153"/>
</dbReference>
<dbReference type="PDB" id="5YCG">
    <property type="method" value="X-ray"/>
    <property type="resolution" value="2.40 A"/>
    <property type="chains" value="A=1-154"/>
</dbReference>
<dbReference type="PDB" id="5YL3">
    <property type="method" value="X-ray"/>
    <property type="resolution" value="1.50 A"/>
    <property type="chains" value="A=1-154"/>
</dbReference>
<dbReference type="PDB" id="5Z7E">
    <property type="method" value="X-ray"/>
    <property type="resolution" value="1.80 A"/>
    <property type="chains" value="A=2-154"/>
</dbReference>
<dbReference type="PDB" id="5Z7F">
    <property type="method" value="X-ray"/>
    <property type="resolution" value="1.90 A"/>
    <property type="chains" value="A=2-154"/>
</dbReference>
<dbReference type="PDB" id="5ZZE">
    <property type="method" value="X-ray"/>
    <property type="resolution" value="1.42 A"/>
    <property type="chains" value="A=2-153"/>
</dbReference>
<dbReference type="PDB" id="6LS8">
    <property type="method" value="X-ray"/>
    <property type="resolution" value="2.30 A"/>
    <property type="chains" value="A/C/E/G/I/K=2-154"/>
</dbReference>
<dbReference type="PDB" id="6LTL">
    <property type="method" value="X-ray"/>
    <property type="resolution" value="1.25 A"/>
    <property type="chains" value="A/B=2-154"/>
</dbReference>
<dbReference type="PDB" id="6LTM">
    <property type="method" value="X-ray"/>
    <property type="resolution" value="1.65 A"/>
    <property type="chains" value="A/B=2-154"/>
</dbReference>
<dbReference type="PDB" id="7DGJ">
    <property type="method" value="X-ray"/>
    <property type="resolution" value="1.60 A"/>
    <property type="chains" value="A/B=2-154"/>
</dbReference>
<dbReference type="PDB" id="7DGK">
    <property type="method" value="X-ray"/>
    <property type="resolution" value="1.75 A"/>
    <property type="chains" value="A/B=2-154"/>
</dbReference>
<dbReference type="PDB" id="7DGL">
    <property type="method" value="X-ray"/>
    <property type="resolution" value="1.91 A"/>
    <property type="chains" value="A/B=2-154"/>
</dbReference>
<dbReference type="PDB" id="7DGM">
    <property type="method" value="X-ray"/>
    <property type="resolution" value="1.62 A"/>
    <property type="chains" value="A/B=2-154"/>
</dbReference>
<dbReference type="PDB" id="7DGN">
    <property type="method" value="X-ray"/>
    <property type="resolution" value="2.35 A"/>
    <property type="chains" value="A/B=2-154"/>
</dbReference>
<dbReference type="PDB" id="7DGO">
    <property type="method" value="X-ray"/>
    <property type="resolution" value="2.00 A"/>
    <property type="chains" value="A/B=2-154"/>
</dbReference>
<dbReference type="PDB" id="7V5P">
    <property type="method" value="X-ray"/>
    <property type="resolution" value="1.16 A"/>
    <property type="chains" value="A/B=2-154"/>
</dbReference>
<dbReference type="PDB" id="7V5Q">
    <property type="method" value="X-ray"/>
    <property type="resolution" value="1.38 A"/>
    <property type="chains" value="A/B=2-154"/>
</dbReference>
<dbReference type="PDB" id="7V5R">
    <property type="method" value="X-ray"/>
    <property type="resolution" value="1.39 A"/>
    <property type="chains" value="A/B=2-154"/>
</dbReference>
<dbReference type="PDB" id="8BKH">
    <property type="method" value="X-ray"/>
    <property type="resolution" value="1.35 A"/>
    <property type="chains" value="A=2-153"/>
</dbReference>
<dbReference type="PDB" id="8BKN">
    <property type="method" value="X-ray"/>
    <property type="resolution" value="1.29 A"/>
    <property type="chains" value="A=2-153"/>
</dbReference>
<dbReference type="PDB" id="8R8F">
    <property type="method" value="X-ray"/>
    <property type="resolution" value="1.40 A"/>
    <property type="chains" value="A=2-153"/>
</dbReference>
<dbReference type="PDB" id="8R8G">
    <property type="method" value="X-ray"/>
    <property type="resolution" value="1.40 A"/>
    <property type="chains" value="A=2-153"/>
</dbReference>
<dbReference type="PDB" id="8R8H">
    <property type="method" value="X-ray"/>
    <property type="resolution" value="1.40 A"/>
    <property type="chains" value="A=2-153"/>
</dbReference>
<dbReference type="PDB" id="8R8I">
    <property type="method" value="X-ray"/>
    <property type="resolution" value="1.40 A"/>
    <property type="chains" value="A=2-153"/>
</dbReference>
<dbReference type="PDB" id="8R8J">
    <property type="method" value="X-ray"/>
    <property type="resolution" value="1.40 A"/>
    <property type="chains" value="A=2-153"/>
</dbReference>
<dbReference type="PDB" id="8R8W">
    <property type="method" value="X-ray"/>
    <property type="resolution" value="1.40 A"/>
    <property type="chains" value="A=2-153"/>
</dbReference>
<dbReference type="PDB" id="8R8X">
    <property type="method" value="X-ray"/>
    <property type="resolution" value="1.40 A"/>
    <property type="chains" value="A=2-153"/>
</dbReference>
<dbReference type="PDB" id="8R8Y">
    <property type="method" value="X-ray"/>
    <property type="resolution" value="1.40 A"/>
    <property type="chains" value="A=2-153"/>
</dbReference>
<dbReference type="PDB" id="8R8Z">
    <property type="method" value="X-ray"/>
    <property type="resolution" value="1.40 A"/>
    <property type="chains" value="A=2-153"/>
</dbReference>
<dbReference type="PDB" id="8R90">
    <property type="method" value="X-ray"/>
    <property type="resolution" value="1.40 A"/>
    <property type="chains" value="A=2-153"/>
</dbReference>
<dbReference type="PDB" id="8R91">
    <property type="method" value="X-ray"/>
    <property type="resolution" value="1.40 A"/>
    <property type="chains" value="A=2-153"/>
</dbReference>
<dbReference type="PDB" id="8R92">
    <property type="method" value="X-ray"/>
    <property type="resolution" value="1.40 A"/>
    <property type="chains" value="A=2-153"/>
</dbReference>
<dbReference type="PDB" id="8R93">
    <property type="method" value="X-ray"/>
    <property type="resolution" value="1.40 A"/>
    <property type="chains" value="A=2-153"/>
</dbReference>
<dbReference type="PDB" id="8R94">
    <property type="method" value="X-ray"/>
    <property type="resolution" value="1.40 A"/>
    <property type="chains" value="A=2-153"/>
</dbReference>
<dbReference type="PDB" id="8R95">
    <property type="method" value="X-ray"/>
    <property type="resolution" value="1.40 A"/>
    <property type="chains" value="A=2-153"/>
</dbReference>
<dbReference type="PDB" id="8R9C">
    <property type="method" value="X-ray"/>
    <property type="resolution" value="1.40 A"/>
    <property type="chains" value="A=2-153"/>
</dbReference>
<dbReference type="PDB" id="8R9D">
    <property type="method" value="X-ray"/>
    <property type="resolution" value="1.40 A"/>
    <property type="chains" value="A=2-153"/>
</dbReference>
<dbReference type="PDB" id="8R9E">
    <property type="method" value="X-ray"/>
    <property type="resolution" value="1.40 A"/>
    <property type="chains" value="A=2-153"/>
</dbReference>
<dbReference type="PDB" id="8R9F">
    <property type="method" value="X-ray"/>
    <property type="resolution" value="1.40 A"/>
    <property type="chains" value="A=2-153"/>
</dbReference>
<dbReference type="PDB" id="8R9G">
    <property type="method" value="X-ray"/>
    <property type="resolution" value="1.40 A"/>
    <property type="chains" value="A=2-153"/>
</dbReference>
<dbReference type="PDB" id="8R9H">
    <property type="method" value="X-ray"/>
    <property type="resolution" value="1.40 A"/>
    <property type="chains" value="A=2-153"/>
</dbReference>
<dbReference type="PDB" id="8R9I">
    <property type="method" value="X-ray"/>
    <property type="resolution" value="1.40 A"/>
    <property type="chains" value="A=2-153"/>
</dbReference>
<dbReference type="PDB" id="8R9J">
    <property type="method" value="X-ray"/>
    <property type="resolution" value="1.40 A"/>
    <property type="chains" value="A=2-153"/>
</dbReference>
<dbReference type="PDB" id="8R9K">
    <property type="method" value="X-ray"/>
    <property type="resolution" value="1.40 A"/>
    <property type="chains" value="A=2-153"/>
</dbReference>
<dbReference type="PDB" id="8R9L">
    <property type="method" value="X-ray"/>
    <property type="resolution" value="1.40 A"/>
    <property type="chains" value="A=2-153"/>
</dbReference>
<dbReference type="PDB" id="8R9M">
    <property type="method" value="X-ray"/>
    <property type="resolution" value="1.40 A"/>
    <property type="chains" value="A=2-153"/>
</dbReference>
<dbReference type="PDB" id="8R9N">
    <property type="method" value="X-ray"/>
    <property type="resolution" value="1.40 A"/>
    <property type="chains" value="A=2-153"/>
</dbReference>
<dbReference type="PDB" id="8R9P">
    <property type="method" value="X-ray"/>
    <property type="resolution" value="1.40 A"/>
    <property type="chains" value="A=2-153"/>
</dbReference>
<dbReference type="PDB" id="8R9Q">
    <property type="method" value="X-ray"/>
    <property type="resolution" value="1.40 A"/>
    <property type="chains" value="A=2-153"/>
</dbReference>
<dbReference type="PDB" id="8RA1">
    <property type="method" value="X-ray"/>
    <property type="resolution" value="1.40 A"/>
    <property type="chains" value="A=2-153"/>
</dbReference>
<dbReference type="PDB" id="8RA2">
    <property type="method" value="X-ray"/>
    <property type="resolution" value="1.40 A"/>
    <property type="chains" value="A=2-153"/>
</dbReference>
<dbReference type="PDB" id="8RA3">
    <property type="method" value="X-ray"/>
    <property type="resolution" value="1.40 A"/>
    <property type="chains" value="A=2-153"/>
</dbReference>
<dbReference type="PDB" id="8RA4">
    <property type="method" value="X-ray"/>
    <property type="resolution" value="1.40 A"/>
    <property type="chains" value="A=2-153"/>
</dbReference>
<dbReference type="PDB" id="8RA5">
    <property type="method" value="X-ray"/>
    <property type="resolution" value="1.40 A"/>
    <property type="chains" value="A=2-153"/>
</dbReference>
<dbReference type="PDB" id="8RA6">
    <property type="method" value="X-ray"/>
    <property type="resolution" value="1.40 A"/>
    <property type="chains" value="A=2-153"/>
</dbReference>
<dbReference type="PDB" id="8RA7">
    <property type="method" value="X-ray"/>
    <property type="resolution" value="1.40 A"/>
    <property type="chains" value="A=2-153"/>
</dbReference>
<dbReference type="PDB" id="8RA8">
    <property type="method" value="X-ray"/>
    <property type="resolution" value="1.40 A"/>
    <property type="chains" value="A=2-153"/>
</dbReference>
<dbReference type="PDB" id="8RA9">
    <property type="method" value="X-ray"/>
    <property type="resolution" value="1.40 A"/>
    <property type="chains" value="A=2-153"/>
</dbReference>
<dbReference type="PDB" id="8RAA">
    <property type="method" value="X-ray"/>
    <property type="resolution" value="1.40 A"/>
    <property type="chains" value="A=2-153"/>
</dbReference>
<dbReference type="PDB" id="8RAB">
    <property type="method" value="X-ray"/>
    <property type="resolution" value="1.40 A"/>
    <property type="chains" value="A=2-153"/>
</dbReference>
<dbReference type="PDB" id="8RAC">
    <property type="method" value="X-ray"/>
    <property type="resolution" value="1.40 A"/>
    <property type="chains" value="A=2-153"/>
</dbReference>
<dbReference type="PDB" id="8RAD">
    <property type="method" value="X-ray"/>
    <property type="resolution" value="1.40 A"/>
    <property type="chains" value="A=2-153"/>
</dbReference>
<dbReference type="PDB" id="8RAE">
    <property type="method" value="X-ray"/>
    <property type="resolution" value="1.40 A"/>
    <property type="chains" value="A=2-153"/>
</dbReference>
<dbReference type="PDB" id="8WF5">
    <property type="method" value="X-ray"/>
    <property type="resolution" value="1.72 A"/>
    <property type="chains" value="A=2-154"/>
</dbReference>
<dbReference type="PDBsum" id="1AZI"/>
<dbReference type="PDBsum" id="1BJE"/>
<dbReference type="PDBsum" id="1DWR"/>
<dbReference type="PDBsum" id="1DWS"/>
<dbReference type="PDBsum" id="1DWT"/>
<dbReference type="PDBsum" id="1GJN"/>
<dbReference type="PDBsum" id="1HRM"/>
<dbReference type="PDBsum" id="1HSY"/>
<dbReference type="PDBsum" id="1NPF"/>
<dbReference type="PDBsum" id="1NPG"/>
<dbReference type="PDBsum" id="1NZ2"/>
<dbReference type="PDBsum" id="1NZ3"/>
<dbReference type="PDBsum" id="1NZ4"/>
<dbReference type="PDBsum" id="1NZ5"/>
<dbReference type="PDBsum" id="1RSE"/>
<dbReference type="PDBsum" id="1WLA"/>
<dbReference type="PDBsum" id="1XCH"/>
<dbReference type="PDBsum" id="1YMA"/>
<dbReference type="PDBsum" id="1YMB"/>
<dbReference type="PDBsum" id="1YMC"/>
<dbReference type="PDBsum" id="2FRF"/>
<dbReference type="PDBsum" id="2FRI"/>
<dbReference type="PDBsum" id="2FRJ"/>
<dbReference type="PDBsum" id="2FRK"/>
<dbReference type="PDBsum" id="2IN4"/>
<dbReference type="PDBsum" id="2NSR"/>
<dbReference type="PDBsum" id="2NSS"/>
<dbReference type="PDBsum" id="2O58"/>
<dbReference type="PDBsum" id="2O5B"/>
<dbReference type="PDBsum" id="2O5L"/>
<dbReference type="PDBsum" id="2O5M"/>
<dbReference type="PDBsum" id="2O5O"/>
<dbReference type="PDBsum" id="2O5Q"/>
<dbReference type="PDBsum" id="2O5S"/>
<dbReference type="PDBsum" id="2O5T"/>
<dbReference type="PDBsum" id="2V1E"/>
<dbReference type="PDBsum" id="2V1F"/>
<dbReference type="PDBsum" id="2V1G"/>
<dbReference type="PDBsum" id="2V1H"/>
<dbReference type="PDBsum" id="2V1I"/>
<dbReference type="PDBsum" id="2V1J"/>
<dbReference type="PDBsum" id="2V1K"/>
<dbReference type="PDBsum" id="2VLX"/>
<dbReference type="PDBsum" id="2VLY"/>
<dbReference type="PDBsum" id="2VLZ"/>
<dbReference type="PDBsum" id="2VM0"/>
<dbReference type="PDBsum" id="3BA2"/>
<dbReference type="PDBsum" id="3HC9"/>
<dbReference type="PDBsum" id="3HEN"/>
<dbReference type="PDBsum" id="3HEO"/>
<dbReference type="PDBsum" id="3HEP"/>
<dbReference type="PDBsum" id="3LR7"/>
<dbReference type="PDBsum" id="3LR9"/>
<dbReference type="PDBsum" id="3RJ6"/>
<dbReference type="PDBsum" id="3RJN"/>
<dbReference type="PDBsum" id="3V2V"/>
<dbReference type="PDBsum" id="3V2Z"/>
<dbReference type="PDBsum" id="3VAU"/>
<dbReference type="PDBsum" id="3VM9"/>
<dbReference type="PDBsum" id="3WFT"/>
<dbReference type="PDBsum" id="3WFU"/>
<dbReference type="PDBsum" id="3WI8"/>
<dbReference type="PDBsum" id="3WYO"/>
<dbReference type="PDBsum" id="4DC7"/>
<dbReference type="PDBsum" id="4DC8"/>
<dbReference type="PDBsum" id="4NS2"/>
<dbReference type="PDBsum" id="4TWU"/>
<dbReference type="PDBsum" id="4TWV"/>
<dbReference type="PDBsum" id="5AZQ"/>
<dbReference type="PDBsum" id="5AZR"/>
<dbReference type="PDBsum" id="5CMV"/>
<dbReference type="PDBsum" id="5CN4"/>
<dbReference type="PDBsum" id="5CN5"/>
<dbReference type="PDBsum" id="5CN6"/>
<dbReference type="PDBsum" id="5CN7"/>
<dbReference type="PDBsum" id="5CN8"/>
<dbReference type="PDBsum" id="5CN9"/>
<dbReference type="PDBsum" id="5CNB"/>
<dbReference type="PDBsum" id="5CNC"/>
<dbReference type="PDBsum" id="5CND"/>
<dbReference type="PDBsum" id="5CNE"/>
<dbReference type="PDBsum" id="5CNF"/>
<dbReference type="PDBsum" id="5CNG"/>
<dbReference type="PDBsum" id="5D5R"/>
<dbReference type="PDBsum" id="5YCG"/>
<dbReference type="PDBsum" id="5YL3"/>
<dbReference type="PDBsum" id="5Z7E"/>
<dbReference type="PDBsum" id="5Z7F"/>
<dbReference type="PDBsum" id="5ZZE"/>
<dbReference type="PDBsum" id="6LS8"/>
<dbReference type="PDBsum" id="6LTL"/>
<dbReference type="PDBsum" id="6LTM"/>
<dbReference type="PDBsum" id="7DGJ"/>
<dbReference type="PDBsum" id="7DGK"/>
<dbReference type="PDBsum" id="7DGL"/>
<dbReference type="PDBsum" id="7DGM"/>
<dbReference type="PDBsum" id="7DGN"/>
<dbReference type="PDBsum" id="7DGO"/>
<dbReference type="PDBsum" id="7V5P"/>
<dbReference type="PDBsum" id="7V5Q"/>
<dbReference type="PDBsum" id="7V5R"/>
<dbReference type="PDBsum" id="8BKH"/>
<dbReference type="PDBsum" id="8BKN"/>
<dbReference type="PDBsum" id="8R8F"/>
<dbReference type="PDBsum" id="8R8G"/>
<dbReference type="PDBsum" id="8R8H"/>
<dbReference type="PDBsum" id="8R8I"/>
<dbReference type="PDBsum" id="8R8J"/>
<dbReference type="PDBsum" id="8R8W"/>
<dbReference type="PDBsum" id="8R8X"/>
<dbReference type="PDBsum" id="8R8Y"/>
<dbReference type="PDBsum" id="8R8Z"/>
<dbReference type="PDBsum" id="8R90"/>
<dbReference type="PDBsum" id="8R91"/>
<dbReference type="PDBsum" id="8R92"/>
<dbReference type="PDBsum" id="8R93"/>
<dbReference type="PDBsum" id="8R94"/>
<dbReference type="PDBsum" id="8R95"/>
<dbReference type="PDBsum" id="8R9C"/>
<dbReference type="PDBsum" id="8R9D"/>
<dbReference type="PDBsum" id="8R9E"/>
<dbReference type="PDBsum" id="8R9F"/>
<dbReference type="PDBsum" id="8R9G"/>
<dbReference type="PDBsum" id="8R9H"/>
<dbReference type="PDBsum" id="8R9I"/>
<dbReference type="PDBsum" id="8R9J"/>
<dbReference type="PDBsum" id="8R9K"/>
<dbReference type="PDBsum" id="8R9L"/>
<dbReference type="PDBsum" id="8R9M"/>
<dbReference type="PDBsum" id="8R9N"/>
<dbReference type="PDBsum" id="8R9P"/>
<dbReference type="PDBsum" id="8R9Q"/>
<dbReference type="PDBsum" id="8RA1"/>
<dbReference type="PDBsum" id="8RA2"/>
<dbReference type="PDBsum" id="8RA3"/>
<dbReference type="PDBsum" id="8RA4"/>
<dbReference type="PDBsum" id="8RA5"/>
<dbReference type="PDBsum" id="8RA6"/>
<dbReference type="PDBsum" id="8RA7"/>
<dbReference type="PDBsum" id="8RA8"/>
<dbReference type="PDBsum" id="8RA9"/>
<dbReference type="PDBsum" id="8RAA"/>
<dbReference type="PDBsum" id="8RAB"/>
<dbReference type="PDBsum" id="8RAC"/>
<dbReference type="PDBsum" id="8RAD"/>
<dbReference type="PDBsum" id="8RAE"/>
<dbReference type="PDBsum" id="8WF5"/>
<dbReference type="BMRB" id="P68082"/>
<dbReference type="PCDDB" id="P68082"/>
<dbReference type="SASBDB" id="P68082"/>
<dbReference type="SMR" id="P68082"/>
<dbReference type="FunCoup" id="P68082">
    <property type="interactions" value="122"/>
</dbReference>
<dbReference type="STRING" id="9796.ENSECAP00000015509"/>
<dbReference type="Allergome" id="10877">
    <property type="allergen name" value="Equ c Myoglobin"/>
</dbReference>
<dbReference type="CarbonylDB" id="P68082"/>
<dbReference type="CPTAC" id="CPTAC-1474"/>
<dbReference type="PaxDb" id="9796-ENSECAP00000015509"/>
<dbReference type="ABCD" id="P68082">
    <property type="antibodies" value="1 sequenced antibody"/>
</dbReference>
<dbReference type="Ensembl" id="ENSECAT00000036478.2">
    <property type="protein sequence ID" value="ENSECAP00000026577.1"/>
    <property type="gene ID" value="ENSECAG00000017982.4"/>
</dbReference>
<dbReference type="GeneID" id="100054434"/>
<dbReference type="KEGG" id="ecb:100054434"/>
<dbReference type="CTD" id="4151"/>
<dbReference type="VGNC" id="VGNC:20004">
    <property type="gene designation" value="MB"/>
</dbReference>
<dbReference type="GeneTree" id="ENSGT00940000160809"/>
<dbReference type="HOGENOM" id="CLU_003827_18_0_1"/>
<dbReference type="InParanoid" id="P68082"/>
<dbReference type="OrthoDB" id="6344802at2759"/>
<dbReference type="TreeFam" id="TF332967"/>
<dbReference type="SABIO-RK" id="P68082"/>
<dbReference type="EvolutionaryTrace" id="P68082"/>
<dbReference type="Proteomes" id="UP000002281">
    <property type="component" value="Chromosome 28"/>
</dbReference>
<dbReference type="Bgee" id="ENSECAG00000017982">
    <property type="expression patterns" value="Expressed in gluteus medius and 12 other cell types or tissues"/>
</dbReference>
<dbReference type="ExpressionAtlas" id="P68082">
    <property type="expression patterns" value="baseline"/>
</dbReference>
<dbReference type="GO" id="GO:0016528">
    <property type="term" value="C:sarcoplasm"/>
    <property type="evidence" value="ECO:0000250"/>
    <property type="project" value="UniProtKB"/>
</dbReference>
<dbReference type="GO" id="GO:0020037">
    <property type="term" value="F:heme binding"/>
    <property type="evidence" value="ECO:0007669"/>
    <property type="project" value="InterPro"/>
</dbReference>
<dbReference type="GO" id="GO:0046872">
    <property type="term" value="F:metal ion binding"/>
    <property type="evidence" value="ECO:0007669"/>
    <property type="project" value="UniProtKB-KW"/>
</dbReference>
<dbReference type="GO" id="GO:0098809">
    <property type="term" value="F:nitrite reductase activity"/>
    <property type="evidence" value="ECO:0000314"/>
    <property type="project" value="UniProtKB"/>
</dbReference>
<dbReference type="GO" id="GO:0019825">
    <property type="term" value="F:oxygen binding"/>
    <property type="evidence" value="ECO:0000318"/>
    <property type="project" value="GO_Central"/>
</dbReference>
<dbReference type="GO" id="GO:0005344">
    <property type="term" value="F:oxygen carrier activity"/>
    <property type="evidence" value="ECO:0000250"/>
    <property type="project" value="UniProtKB"/>
</dbReference>
<dbReference type="GO" id="GO:0004601">
    <property type="term" value="F:peroxidase activity"/>
    <property type="evidence" value="ECO:0000250"/>
    <property type="project" value="UniProtKB"/>
</dbReference>
<dbReference type="GO" id="GO:0015671">
    <property type="term" value="P:oxygen transport"/>
    <property type="evidence" value="ECO:0000318"/>
    <property type="project" value="GO_Central"/>
</dbReference>
<dbReference type="GO" id="GO:0019430">
    <property type="term" value="P:removal of superoxide radicals"/>
    <property type="evidence" value="ECO:0000250"/>
    <property type="project" value="UniProtKB"/>
</dbReference>
<dbReference type="CDD" id="cd08926">
    <property type="entry name" value="Mb"/>
    <property type="match status" value="1"/>
</dbReference>
<dbReference type="Gene3D" id="6.10.140.2100">
    <property type="match status" value="1"/>
</dbReference>
<dbReference type="Gene3D" id="6.10.140.2110">
    <property type="match status" value="1"/>
</dbReference>
<dbReference type="InterPro" id="IPR000971">
    <property type="entry name" value="Globin"/>
</dbReference>
<dbReference type="InterPro" id="IPR009050">
    <property type="entry name" value="Globin-like_sf"/>
</dbReference>
<dbReference type="InterPro" id="IPR002335">
    <property type="entry name" value="Myoglobin"/>
</dbReference>
<dbReference type="PANTHER" id="PTHR47132">
    <property type="entry name" value="MYOGLOBIN"/>
    <property type="match status" value="1"/>
</dbReference>
<dbReference type="PANTHER" id="PTHR47132:SF1">
    <property type="entry name" value="MYOGLOBIN"/>
    <property type="match status" value="1"/>
</dbReference>
<dbReference type="Pfam" id="PF00042">
    <property type="entry name" value="Globin"/>
    <property type="match status" value="1"/>
</dbReference>
<dbReference type="PRINTS" id="PR00613">
    <property type="entry name" value="MYOGLOBIN"/>
</dbReference>
<dbReference type="SUPFAM" id="SSF46458">
    <property type="entry name" value="Globin-like"/>
    <property type="match status" value="1"/>
</dbReference>
<dbReference type="PROSITE" id="PS01033">
    <property type="entry name" value="GLOBIN"/>
    <property type="match status" value="1"/>
</dbReference>
<evidence type="ECO:0000250" key="1">
    <source>
        <dbReference type="UniProtKB" id="P02144"/>
    </source>
</evidence>
<evidence type="ECO:0000250" key="2">
    <source>
        <dbReference type="UniProtKB" id="P02185"/>
    </source>
</evidence>
<evidence type="ECO:0000250" key="3">
    <source>
        <dbReference type="UniProtKB" id="P02189"/>
    </source>
</evidence>
<evidence type="ECO:0000250" key="4">
    <source>
        <dbReference type="UniProtKB" id="Q9QZ76"/>
    </source>
</evidence>
<evidence type="ECO:0000255" key="5">
    <source>
        <dbReference type="PROSITE-ProRule" id="PRU00238"/>
    </source>
</evidence>
<evidence type="ECO:0000269" key="6">
    <source>
    </source>
</evidence>
<evidence type="ECO:0000269" key="7">
    <source>
    </source>
</evidence>
<evidence type="ECO:0000269" key="8">
    <source>
    </source>
</evidence>
<evidence type="ECO:0000269" key="9">
    <source>
    </source>
</evidence>
<evidence type="ECO:0000269" key="10">
    <source>
    </source>
</evidence>
<evidence type="ECO:0000269" key="11">
    <source>
    </source>
</evidence>
<evidence type="ECO:0000269" key="12">
    <source>
    </source>
</evidence>
<evidence type="ECO:0000269" key="13">
    <source ref="2"/>
</evidence>
<evidence type="ECO:0000303" key="14">
    <source>
    </source>
</evidence>
<evidence type="ECO:0000305" key="15"/>
<evidence type="ECO:0000305" key="16">
    <source>
    </source>
</evidence>
<evidence type="ECO:0007744" key="17">
    <source>
        <dbReference type="PDB" id="1AZI"/>
    </source>
</evidence>
<evidence type="ECO:0007744" key="18">
    <source>
        <dbReference type="PDB" id="1BJE"/>
    </source>
</evidence>
<evidence type="ECO:0007744" key="19">
    <source>
        <dbReference type="PDB" id="1DWR"/>
    </source>
</evidence>
<evidence type="ECO:0007744" key="20">
    <source>
        <dbReference type="PDB" id="1DWS"/>
    </source>
</evidence>
<evidence type="ECO:0007744" key="21">
    <source>
        <dbReference type="PDB" id="1DWT"/>
    </source>
</evidence>
<evidence type="ECO:0007744" key="22">
    <source>
        <dbReference type="PDB" id="1GJN"/>
    </source>
</evidence>
<evidence type="ECO:0007744" key="23">
    <source>
        <dbReference type="PDB" id="1HSY"/>
    </source>
</evidence>
<evidence type="ECO:0007744" key="24">
    <source>
        <dbReference type="PDB" id="1NPF"/>
    </source>
</evidence>
<evidence type="ECO:0007744" key="25">
    <source>
        <dbReference type="PDB" id="1NPG"/>
    </source>
</evidence>
<evidence type="ECO:0007744" key="26">
    <source>
        <dbReference type="PDB" id="1NZ2"/>
    </source>
</evidence>
<evidence type="ECO:0007744" key="27">
    <source>
        <dbReference type="PDB" id="1NZ3"/>
    </source>
</evidence>
<evidence type="ECO:0007744" key="28">
    <source>
        <dbReference type="PDB" id="1NZ4"/>
    </source>
</evidence>
<evidence type="ECO:0007744" key="29">
    <source>
        <dbReference type="PDB" id="1NZ5"/>
    </source>
</evidence>
<evidence type="ECO:0007744" key="30">
    <source>
        <dbReference type="PDB" id="1RSE"/>
    </source>
</evidence>
<evidence type="ECO:0007744" key="31">
    <source>
        <dbReference type="PDB" id="1WLA"/>
    </source>
</evidence>
<evidence type="ECO:0007744" key="32">
    <source>
        <dbReference type="PDB" id="1XCH"/>
    </source>
</evidence>
<evidence type="ECO:0007744" key="33">
    <source>
        <dbReference type="PDB" id="1YMA"/>
    </source>
</evidence>
<evidence type="ECO:0007744" key="34">
    <source>
        <dbReference type="PDB" id="1YMB"/>
    </source>
</evidence>
<evidence type="ECO:0007744" key="35">
    <source>
        <dbReference type="PDB" id="2FRF"/>
    </source>
</evidence>
<evidence type="ECO:0007744" key="36">
    <source>
        <dbReference type="PDB" id="2FRI"/>
    </source>
</evidence>
<evidence type="ECO:0007744" key="37">
    <source>
        <dbReference type="PDB" id="2FRJ"/>
    </source>
</evidence>
<evidence type="ECO:0007744" key="38">
    <source>
        <dbReference type="PDB" id="2FRK"/>
    </source>
</evidence>
<evidence type="ECO:0007744" key="39">
    <source>
        <dbReference type="PDB" id="2NSR"/>
    </source>
</evidence>
<evidence type="ECO:0007744" key="40">
    <source>
        <dbReference type="PDB" id="2NSS"/>
    </source>
</evidence>
<evidence type="ECO:0007744" key="41">
    <source>
        <dbReference type="PDB" id="2V1E"/>
    </source>
</evidence>
<evidence type="ECO:0007744" key="42">
    <source>
        <dbReference type="PDB" id="2V1F"/>
    </source>
</evidence>
<evidence type="ECO:0007744" key="43">
    <source>
        <dbReference type="PDB" id="2V1G"/>
    </source>
</evidence>
<evidence type="ECO:0007744" key="44">
    <source>
        <dbReference type="PDB" id="2V1H"/>
    </source>
</evidence>
<evidence type="ECO:0007744" key="45">
    <source>
        <dbReference type="PDB" id="2V1I"/>
    </source>
</evidence>
<evidence type="ECO:0007744" key="46">
    <source>
        <dbReference type="PDB" id="2V1J"/>
    </source>
</evidence>
<evidence type="ECO:0007744" key="47">
    <source>
        <dbReference type="PDB" id="2V1K"/>
    </source>
</evidence>
<evidence type="ECO:0007744" key="48">
    <source>
        <dbReference type="PDB" id="2VLX"/>
    </source>
</evidence>
<evidence type="ECO:0007744" key="49">
    <source>
        <dbReference type="PDB" id="2VLY"/>
    </source>
</evidence>
<evidence type="ECO:0007744" key="50">
    <source>
        <dbReference type="PDB" id="2VLZ"/>
    </source>
</evidence>
<evidence type="ECO:0007744" key="51">
    <source>
        <dbReference type="PDB" id="2VM0"/>
    </source>
</evidence>
<evidence type="ECO:0007744" key="52">
    <source>
        <dbReference type="PDB" id="3HC9"/>
    </source>
</evidence>
<evidence type="ECO:0007744" key="53">
    <source>
        <dbReference type="PDB" id="3HEN"/>
    </source>
</evidence>
<evidence type="ECO:0007744" key="54">
    <source>
        <dbReference type="PDB" id="3HEO"/>
    </source>
</evidence>
<evidence type="ECO:0007744" key="55">
    <source>
        <dbReference type="PDB" id="3HEP"/>
    </source>
</evidence>
<evidence type="ECO:0007744" key="56">
    <source>
        <dbReference type="PDB" id="3LR7"/>
    </source>
</evidence>
<evidence type="ECO:0007744" key="57">
    <source>
        <dbReference type="PDB" id="3LR9"/>
    </source>
</evidence>
<evidence type="ECO:0007744" key="58">
    <source>
        <dbReference type="PDB" id="3RJ6"/>
    </source>
</evidence>
<evidence type="ECO:0007744" key="59">
    <source>
        <dbReference type="PDB" id="3VAU"/>
    </source>
</evidence>
<evidence type="ECO:0007744" key="60">
    <source>
        <dbReference type="PDB" id="3VM9"/>
    </source>
</evidence>
<evidence type="ECO:0007744" key="61">
    <source>
        <dbReference type="PDB" id="3WYO"/>
    </source>
</evidence>
<evidence type="ECO:0007744" key="62">
    <source>
        <dbReference type="PDB" id="4DC7"/>
    </source>
</evidence>
<evidence type="ECO:0007744" key="63">
    <source>
        <dbReference type="PDB" id="4DC8"/>
    </source>
</evidence>
<evidence type="ECO:0007744" key="64">
    <source>
        <dbReference type="PDB" id="4NS2"/>
    </source>
</evidence>
<evidence type="ECO:0007829" key="65">
    <source>
        <dbReference type="PDB" id="3VM9"/>
    </source>
</evidence>
<evidence type="ECO:0007829" key="66">
    <source>
        <dbReference type="PDB" id="5AZQ"/>
    </source>
</evidence>
<accession>P68082</accession>
<accession>P02188</accession>
<proteinExistence type="evidence at protein level"/>
<name>MYG_HORSE</name>
<organism>
    <name type="scientific">Equus caballus</name>
    <name type="common">Horse</name>
    <dbReference type="NCBI Taxonomy" id="9796"/>
    <lineage>
        <taxon>Eukaryota</taxon>
        <taxon>Metazoa</taxon>
        <taxon>Chordata</taxon>
        <taxon>Craniata</taxon>
        <taxon>Vertebrata</taxon>
        <taxon>Euteleostomi</taxon>
        <taxon>Mammalia</taxon>
        <taxon>Eutheria</taxon>
        <taxon>Laurasiatheria</taxon>
        <taxon>Perissodactyla</taxon>
        <taxon>Equidae</taxon>
        <taxon>Equus</taxon>
    </lineage>
</organism>
<reference key="1">
    <citation type="journal article" date="1969" name="Eur. J. Biochem.">
        <title>Covalent structure of horse myoglobin.</title>
        <authorList>
            <person name="Dautrevaux M."/>
            <person name="Boulanger Y."/>
            <person name="Han K."/>
            <person name="Biserte G."/>
        </authorList>
    </citation>
    <scope>PROTEIN SEQUENCE OF 2-154</scope>
    <source>
        <tissue>Heart muscle</tissue>
    </source>
</reference>
<reference key="2">
    <citation type="journal article" date="1974" name="Biochim. Biophys. Acta">
        <title>Residue 122 of sperm whale and horse myoglobin.</title>
        <authorList>
            <person name="Romero-Herrera A.E."/>
            <person name="Lehmann H."/>
        </authorList>
    </citation>
    <scope>PROTEIN SEQUENCE OF 2-154</scope>
    <source>
        <tissue>Skeletal muscle</tissue>
    </source>
</reference>
<reference key="3">
    <citation type="journal article" date="1990" name="Biochem. Biophys. Res. Commun.">
        <title>Internal amino acid sequencing of proteins by in situ cyanogen bromide cleavage in polyacrylamide gels.</title>
        <authorList>
            <person name="Jahnen W."/>
            <person name="Ward L.D."/>
            <person name="Reid G.E."/>
            <person name="Moritz R.L."/>
            <person name="Simpson R.J."/>
        </authorList>
    </citation>
    <scope>PROTEIN SEQUENCE OF 2-16 AND 57-71</scope>
</reference>
<reference key="4">
    <citation type="journal article" date="2020" name="Nitric Oxide">
        <title>Myoglobin promotes nitrite-dependent mitochondrial S-nitrosation to mediate cytoprotection after hypoxia/reoxygenation.</title>
        <authorList>
            <person name="Quesnelle K."/>
            <person name="Guimaraes D.A."/>
            <person name="Rao K."/>
            <person name="Singh A.B."/>
            <person name="Wang Y."/>
            <person name="Hogg N."/>
            <person name="Shiva S."/>
        </authorList>
    </citation>
    <scope>FUNCTION</scope>
    <scope>CATALYTIC ACTIVITY</scope>
</reference>
<reference key="5">
    <citation type="journal article" date="1990" name="J. Mol. Biol.">
        <title>High-resolution study of the three-dimensional structure of horse heart metmyoglobin.</title>
        <authorList>
            <person name="Evans S.V."/>
            <person name="Brayer G.D."/>
        </authorList>
    </citation>
    <scope>X-RAY CRYSTALLOGRAPHY (1.90 ANGSTROMS) OF 2-154 IN COMPLEX WITH HEME</scope>
</reference>
<reference key="6">
    <citation type="journal article" date="1988" name="J. Biol. Chem.">
        <title>Horse heart metmyoglobin. A 2.8-A resolution three-dimensional structure determination.</title>
        <authorList>
            <person name="Evans S.V."/>
            <person name="Brayer G.D."/>
        </authorList>
    </citation>
    <scope>X-RAY CRYSTALLOGRAPHY (2.8 ANGSTROMS)</scope>
</reference>
<reference key="7">
    <citation type="journal article" date="1995" name="Biochemistry">
        <title>Origin of the pH-dependent spectroscopic properties of pentacoordinate metmyoglobin variants.</title>
        <authorList>
            <person name="Bogumil R."/>
            <person name="Maurus R."/>
            <person name="Hildebrand D.P."/>
            <person name="Brayer G.D."/>
            <person name="Mauk A.G."/>
        </authorList>
    </citation>
    <scope>X-RAY CRYSTALLOGRAPHY (1.9 ANGSTROMS) OF MUTANT THR-65</scope>
</reference>
<reference key="8">
    <citation type="journal article" date="2000" name="Nature">
        <title>Structure of a ligand-binding intermediate in wild-type carbonmonoxy myoglobin.</title>
        <authorList>
            <person name="Chu K."/>
            <person name="Vojtchovsky J."/>
            <person name="McMahon B.H."/>
            <person name="Sweet R.M."/>
            <person name="Berendzen J."/>
            <person name="Schlichting I."/>
        </authorList>
    </citation>
    <scope>X-RAY CRYSTALLOGRAPHY (1.40 ANGSTROMS) OF 2-154 IN COMPLEX WITH HEME</scope>
</reference>
<reference evidence="59" key="9">
    <citation type="journal article" date="2012" name="Chem. Commun. (Camb.)">
        <title>Unveiling the three-dimensional structure of the green pigment of nitrite-cured meat.</title>
        <authorList>
            <person name="Yi J."/>
            <person name="Richter-Addo G.B."/>
        </authorList>
    </citation>
    <scope>X-RAY CRYSTALLOGRAPHY (1.70 ANGSTROMS) OF 2-154 IN COMPLEX WITH NITRITE</scope>
</reference>
<sequence>MGLSDGEWQQVLNVWGKVEADIAGHGQEVLIRLFTGHPETLEKFDKFKHLKTEAEMKASEDLKKHGTVVLTALGGILKKKGHHEAELKPLAQSHATKHKIPIKYLEFISDAIIHVLHSKHPGDFGADAQGAMTKALELFRNDIAAKYKELGFQG</sequence>
<keyword id="KW-0002">3D-structure</keyword>
<keyword id="KW-0963">Cytoplasm</keyword>
<keyword id="KW-0903">Direct protein sequencing</keyword>
<keyword id="KW-0349">Heme</keyword>
<keyword id="KW-0408">Iron</keyword>
<keyword id="KW-0479">Metal-binding</keyword>
<keyword id="KW-0514">Muscle protein</keyword>
<keyword id="KW-0560">Oxidoreductase</keyword>
<keyword id="KW-0561">Oxygen transport</keyword>
<keyword id="KW-0597">Phosphoprotein</keyword>
<keyword id="KW-1185">Reference proteome</keyword>
<keyword id="KW-0813">Transport</keyword>
<comment type="function">
    <text evidence="1 10">Monomeric heme protein which primary function is to store oxygen and facilitate its diffusion within muscle tissues. Reversibly binds oxygen through a pentacoordinated heme iron and enables its timely and efficient release as needed during periods of heightened demand (By similarity). Depending on the oxidative conditions of tissues and cells, and in addition to its ability to bind oxygen, it also has a nitrite reductase activity whereby it regulates the production of bioactive nitric oxide (PubMed:32891753). Under stress conditions, like hypoxia and anoxia, it also protects cells against reactive oxygen species thanks to its pseudoperoxidase activity (By similarity).</text>
</comment>
<comment type="catalytic activity">
    <reaction evidence="10">
        <text>Fe(III)-heme b-[protein] + nitric oxide + H2O = Fe(II)-heme b-[protein] + nitrite + 2 H(+)</text>
        <dbReference type="Rhea" id="RHEA:77711"/>
        <dbReference type="Rhea" id="RHEA-COMP:18975"/>
        <dbReference type="Rhea" id="RHEA-COMP:18976"/>
        <dbReference type="ChEBI" id="CHEBI:15377"/>
        <dbReference type="ChEBI" id="CHEBI:15378"/>
        <dbReference type="ChEBI" id="CHEBI:16301"/>
        <dbReference type="ChEBI" id="CHEBI:16480"/>
        <dbReference type="ChEBI" id="CHEBI:55376"/>
        <dbReference type="ChEBI" id="CHEBI:60344"/>
    </reaction>
    <physiologicalReaction direction="right-to-left" evidence="16">
        <dbReference type="Rhea" id="RHEA:77713"/>
    </physiologicalReaction>
</comment>
<comment type="catalytic activity">
    <reaction evidence="1">
        <text>H2O2 + AH2 = A + 2 H2O</text>
        <dbReference type="Rhea" id="RHEA:30275"/>
        <dbReference type="ChEBI" id="CHEBI:13193"/>
        <dbReference type="ChEBI" id="CHEBI:15377"/>
        <dbReference type="ChEBI" id="CHEBI:16240"/>
        <dbReference type="ChEBI" id="CHEBI:17499"/>
    </reaction>
</comment>
<comment type="subunit">
    <text evidence="2">Monomeric.</text>
</comment>
<comment type="subcellular location">
    <subcellularLocation>
        <location evidence="1">Cytoplasm</location>
        <location evidence="1">Sarcoplasm</location>
    </subcellularLocation>
</comment>
<comment type="similarity">
    <text evidence="5">Belongs to the globin family.</text>
</comment>
<protein>
    <recommendedName>
        <fullName evidence="14">Myoglobin</fullName>
    </recommendedName>
    <alternativeName>
        <fullName evidence="16">Nitrite reductase MB</fullName>
        <ecNumber evidence="10">1.7.-.-</ecNumber>
    </alternativeName>
    <alternativeName>
        <fullName evidence="1">Pseudoperoxidase MB</fullName>
        <ecNumber evidence="1">1.11.1.-</ecNumber>
    </alternativeName>
</protein>